<feature type="chain" id="PRO_0000086226" description="Serine/threonine-protein kinase ksg1">
    <location>
        <begin position="1"/>
        <end position="592"/>
    </location>
</feature>
<feature type="domain" description="Protein kinase" evidence="2">
    <location>
        <begin position="99"/>
        <end position="366"/>
    </location>
</feature>
<feature type="domain" description="PH">
    <location>
        <begin position="461"/>
        <end position="572"/>
    </location>
</feature>
<feature type="region of interest" description="Disordered" evidence="4">
    <location>
        <begin position="1"/>
        <end position="92"/>
    </location>
</feature>
<feature type="region of interest" description="PIF-pocket" evidence="1">
    <location>
        <begin position="130"/>
        <end position="175"/>
    </location>
</feature>
<feature type="compositionally biased region" description="Polar residues" evidence="4">
    <location>
        <begin position="1"/>
        <end position="10"/>
    </location>
</feature>
<feature type="compositionally biased region" description="Acidic residues" evidence="4">
    <location>
        <begin position="11"/>
        <end position="22"/>
    </location>
</feature>
<feature type="compositionally biased region" description="Basic and acidic residues" evidence="4">
    <location>
        <begin position="27"/>
        <end position="37"/>
    </location>
</feature>
<feature type="compositionally biased region" description="Polar residues" evidence="4">
    <location>
        <begin position="42"/>
        <end position="68"/>
    </location>
</feature>
<feature type="compositionally biased region" description="Polar residues" evidence="4">
    <location>
        <begin position="80"/>
        <end position="92"/>
    </location>
</feature>
<feature type="active site" description="Proton acceptor" evidence="2 3">
    <location>
        <position position="223"/>
    </location>
</feature>
<feature type="binding site" evidence="1">
    <location>
        <begin position="109"/>
        <end position="111"/>
    </location>
    <ligand>
        <name>ATP</name>
        <dbReference type="ChEBI" id="CHEBI:30616"/>
    </ligand>
</feature>
<feature type="binding site" evidence="1">
    <location>
        <position position="128"/>
    </location>
    <ligand>
        <name>ATP</name>
        <dbReference type="ChEBI" id="CHEBI:30616"/>
    </ligand>
</feature>
<feature type="binding site" evidence="1">
    <location>
        <begin position="178"/>
        <end position="180"/>
    </location>
    <ligand>
        <name>ATP</name>
        <dbReference type="ChEBI" id="CHEBI:30616"/>
    </ligand>
</feature>
<feature type="binding site" evidence="1">
    <location>
        <position position="184"/>
    </location>
    <ligand>
        <name>ATP</name>
        <dbReference type="ChEBI" id="CHEBI:30616"/>
    </ligand>
</feature>
<feature type="binding site" evidence="1">
    <location>
        <position position="227"/>
    </location>
    <ligand>
        <name>ATP</name>
        <dbReference type="ChEBI" id="CHEBI:30616"/>
    </ligand>
</feature>
<feature type="binding site" evidence="1">
    <location>
        <position position="241"/>
    </location>
    <ligand>
        <name>ATP</name>
        <dbReference type="ChEBI" id="CHEBI:30616"/>
    </ligand>
</feature>
<feature type="modified residue" description="Phosphoserine" evidence="8">
    <location>
        <position position="64"/>
    </location>
</feature>
<feature type="modified residue" description="Phosphoserine" evidence="8">
    <location>
        <position position="69"/>
    </location>
</feature>
<accession>Q12701</accession>
<sequence length="592" mass="65662">MRNTHNPNETEASEDAENDTQSESDLSFDHGSSEKLNRASLPKTQNSAIPQSNALNTTPNESTSQIDSSPKIPSAVPHISTPNPSSGASTPNIKRVSDFKFGEILGEGSYSTVLTATENSTKREYAIKVLDKRHIIKEKKEKYVNIEKEALCILSKHPGFIKLFYTFQDAHNLYFVLSLARNGELLDYINKLGRFNEICAQYYAALIVDSIDYMHGRGVIHRDLKPENILLDDNMRTKITDFGSAKILNSSHGSHEEDTHHADKPQAHSRSFVGTARYVSPEVLSDKIAGTASDIWAFGCILFQMLAGKPPFVAGNEYLTFQSILHLSYEIPPDISDVASDLIKKLLVLDPKDRLTVDEIHQHPFFNGIKFDNTLWELPPPRLKPFGHTSVLSLSVPNASNKHENGDLTSPLGVPSMVSASTNAAPSPVGTFNRGTLLPCQSNLEEENKEWSSILQDDEKISKIGTLNVYSMSGINGNDAFRFFSSLFRKRKPRTFILTNFGRYLCVASDGEGRKTVKEEIPIKSVGMRCRMVKNNEHGWVVETPTKSWSFEDPNGPASAWVELLDKASSISLPFGNHSVTSFSRSIARSAV</sequence>
<name>KSG1_SCHPO</name>
<keyword id="KW-0067">ATP-binding</keyword>
<keyword id="KW-0963">Cytoplasm</keyword>
<keyword id="KW-0418">Kinase</keyword>
<keyword id="KW-0547">Nucleotide-binding</keyword>
<keyword id="KW-0597">Phosphoprotein</keyword>
<keyword id="KW-1185">Reference proteome</keyword>
<keyword id="KW-0723">Serine/threonine-protein kinase</keyword>
<keyword id="KW-0808">Transferase</keyword>
<gene>
    <name evidence="10" type="primary">ksg1</name>
    <name evidence="13" type="ORF">SPCC576.15c</name>
</gene>
<comment type="function">
    <text evidence="5 6 9">Involved in the control of sexual development and cell growth under stressed conditions. Phosphorylates AGC kinase gad8 at 'Thr-387', activating gad8 kinase activity and promoting sexual development (PubMed:12805221). Phosphorylates AGC kinase psk1 at 'Ser-248', activating psk1 kinase activity and promoting phosphorylation of ribosomal protein S6 (PubMed:22976295).</text>
</comment>
<comment type="catalytic activity">
    <reaction evidence="6 9">
        <text>L-seryl-[protein] + ATP = O-phospho-L-seryl-[protein] + ADP + H(+)</text>
        <dbReference type="Rhea" id="RHEA:17989"/>
        <dbReference type="Rhea" id="RHEA-COMP:9863"/>
        <dbReference type="Rhea" id="RHEA-COMP:11604"/>
        <dbReference type="ChEBI" id="CHEBI:15378"/>
        <dbReference type="ChEBI" id="CHEBI:29999"/>
        <dbReference type="ChEBI" id="CHEBI:30616"/>
        <dbReference type="ChEBI" id="CHEBI:83421"/>
        <dbReference type="ChEBI" id="CHEBI:456216"/>
        <dbReference type="EC" id="2.7.11.1"/>
    </reaction>
</comment>
<comment type="catalytic activity">
    <reaction evidence="6 9">
        <text>L-threonyl-[protein] + ATP = O-phospho-L-threonyl-[protein] + ADP + H(+)</text>
        <dbReference type="Rhea" id="RHEA:46608"/>
        <dbReference type="Rhea" id="RHEA-COMP:11060"/>
        <dbReference type="Rhea" id="RHEA-COMP:11605"/>
        <dbReference type="ChEBI" id="CHEBI:15378"/>
        <dbReference type="ChEBI" id="CHEBI:30013"/>
        <dbReference type="ChEBI" id="CHEBI:30616"/>
        <dbReference type="ChEBI" id="CHEBI:61977"/>
        <dbReference type="ChEBI" id="CHEBI:456216"/>
        <dbReference type="EC" id="2.7.11.1"/>
    </reaction>
</comment>
<comment type="subcellular location">
    <subcellularLocation>
        <location evidence="7">Cytoplasm</location>
    </subcellularLocation>
</comment>
<comment type="domain">
    <text evidence="1">The PIF-pocket is a small lobe in the catalytic domain required by the enzyme for the binding to the hydrophobic motif of its substrates. It is an allosteric regulatory site that can accommodate small compounds acting as allosteric inhibitors.</text>
</comment>
<comment type="similarity">
    <text evidence="11">Belongs to the protein kinase superfamily. AGC Ser/Thr protein kinase family. PDPK1 subfamily.</text>
</comment>
<proteinExistence type="evidence at protein level"/>
<evidence type="ECO:0000250" key="1">
    <source>
        <dbReference type="UniProtKB" id="O15530"/>
    </source>
</evidence>
<evidence type="ECO:0000255" key="2">
    <source>
        <dbReference type="PROSITE-ProRule" id="PRU00159"/>
    </source>
</evidence>
<evidence type="ECO:0000255" key="3">
    <source>
        <dbReference type="PROSITE-ProRule" id="PRU10027"/>
    </source>
</evidence>
<evidence type="ECO:0000256" key="4">
    <source>
        <dbReference type="SAM" id="MobiDB-lite"/>
    </source>
</evidence>
<evidence type="ECO:0000269" key="5">
    <source>
    </source>
</evidence>
<evidence type="ECO:0000269" key="6">
    <source>
    </source>
</evidence>
<evidence type="ECO:0000269" key="7">
    <source>
    </source>
</evidence>
<evidence type="ECO:0000269" key="8">
    <source>
    </source>
</evidence>
<evidence type="ECO:0000269" key="9">
    <source>
    </source>
</evidence>
<evidence type="ECO:0000303" key="10">
    <source>
    </source>
</evidence>
<evidence type="ECO:0000305" key="11"/>
<evidence type="ECO:0000305" key="12">
    <source>
    </source>
</evidence>
<evidence type="ECO:0000312" key="13">
    <source>
        <dbReference type="PomBase" id="SPCC576.15c"/>
    </source>
</evidence>
<organism>
    <name type="scientific">Schizosaccharomyces pombe (strain 972 / ATCC 24843)</name>
    <name type="common">Fission yeast</name>
    <dbReference type="NCBI Taxonomy" id="284812"/>
    <lineage>
        <taxon>Eukaryota</taxon>
        <taxon>Fungi</taxon>
        <taxon>Dikarya</taxon>
        <taxon>Ascomycota</taxon>
        <taxon>Taphrinomycotina</taxon>
        <taxon>Schizosaccharomycetes</taxon>
        <taxon>Schizosaccharomycetales</taxon>
        <taxon>Schizosaccharomycetaceae</taxon>
        <taxon>Schizosaccharomyces</taxon>
    </lineage>
</organism>
<protein>
    <recommendedName>
        <fullName evidence="12">Serine/threonine-protein kinase ksg1</fullName>
        <ecNumber evidence="6 9">2.7.11.1</ecNumber>
    </recommendedName>
    <alternativeName>
        <fullName evidence="10">PDK1-like kinase ksg1</fullName>
    </alternativeName>
</protein>
<dbReference type="EC" id="2.7.11.1" evidence="6 9"/>
<dbReference type="EMBL" id="X99280">
    <property type="protein sequence ID" value="CAA67672.1"/>
    <property type="molecule type" value="Genomic_DNA"/>
</dbReference>
<dbReference type="EMBL" id="CU329672">
    <property type="protein sequence ID" value="CAA21194.1"/>
    <property type="molecule type" value="Genomic_DNA"/>
</dbReference>
<dbReference type="PIR" id="T43402">
    <property type="entry name" value="T43402"/>
</dbReference>
<dbReference type="RefSeq" id="NP_588442.1">
    <property type="nucleotide sequence ID" value="NM_001023433.2"/>
</dbReference>
<dbReference type="SMR" id="Q12701"/>
<dbReference type="BioGRID" id="276079">
    <property type="interactions" value="16"/>
</dbReference>
<dbReference type="FunCoup" id="Q12701">
    <property type="interactions" value="381"/>
</dbReference>
<dbReference type="STRING" id="284812.Q12701"/>
<dbReference type="iPTMnet" id="Q12701"/>
<dbReference type="PaxDb" id="4896-SPCC576.15c.1"/>
<dbReference type="EnsemblFungi" id="SPCC576.15c.1">
    <property type="protein sequence ID" value="SPCC576.15c.1:pep"/>
    <property type="gene ID" value="SPCC576.15c"/>
</dbReference>
<dbReference type="GeneID" id="2539517"/>
<dbReference type="KEGG" id="spo:2539517"/>
<dbReference type="PomBase" id="SPCC576.15c">
    <property type="gene designation" value="ksg1"/>
</dbReference>
<dbReference type="VEuPathDB" id="FungiDB:SPCC576.15c"/>
<dbReference type="eggNOG" id="KOG0592">
    <property type="taxonomic scope" value="Eukaryota"/>
</dbReference>
<dbReference type="HOGENOM" id="CLU_000288_63_9_1"/>
<dbReference type="InParanoid" id="Q12701"/>
<dbReference type="OMA" id="NEYLVFQ"/>
<dbReference type="PhylomeDB" id="Q12701"/>
<dbReference type="BRENDA" id="2.7.11.1">
    <property type="organism ID" value="5613"/>
</dbReference>
<dbReference type="Reactome" id="R-SPO-114604">
    <property type="pathway name" value="GPVI-mediated activation cascade"/>
</dbReference>
<dbReference type="Reactome" id="R-SPO-1257604">
    <property type="pathway name" value="PIP3 activates AKT signaling"/>
</dbReference>
<dbReference type="Reactome" id="R-SPO-165158">
    <property type="pathway name" value="Activation of AKT2"/>
</dbReference>
<dbReference type="Reactome" id="R-SPO-202424">
    <property type="pathway name" value="Downstream TCR signaling"/>
</dbReference>
<dbReference type="Reactome" id="R-SPO-2730905">
    <property type="pathway name" value="Role of LAT2/NTAL/LAB on calcium mobilization"/>
</dbReference>
<dbReference type="Reactome" id="R-SPO-389357">
    <property type="pathway name" value="CD28 dependent PI3K/Akt signaling"/>
</dbReference>
<dbReference type="Reactome" id="R-SPO-392451">
    <property type="pathway name" value="G beta:gamma signalling through PI3Kgamma"/>
</dbReference>
<dbReference type="Reactome" id="R-SPO-5218920">
    <property type="pathway name" value="VEGFR2 mediated vascular permeability"/>
</dbReference>
<dbReference type="Reactome" id="R-SPO-5218921">
    <property type="pathway name" value="VEGFR2 mediated cell proliferation"/>
</dbReference>
<dbReference type="Reactome" id="R-SPO-5625740">
    <property type="pathway name" value="RHO GTPases activate PKNs"/>
</dbReference>
<dbReference type="Reactome" id="R-SPO-6804757">
    <property type="pathway name" value="Regulation of TP53 Degradation"/>
</dbReference>
<dbReference type="Reactome" id="R-SPO-9634635">
    <property type="pathway name" value="Estrogen-stimulated signaling through PRKCZ"/>
</dbReference>
<dbReference type="Reactome" id="R-SPO-9856530">
    <property type="pathway name" value="High laminar flow shear stress activates signaling by PIEZO1 and PECAM1:CDH5:KDR in endothelial cells"/>
</dbReference>
<dbReference type="PRO" id="PR:Q12701"/>
<dbReference type="Proteomes" id="UP000002485">
    <property type="component" value="Chromosome III"/>
</dbReference>
<dbReference type="GO" id="GO:0005737">
    <property type="term" value="C:cytoplasm"/>
    <property type="evidence" value="ECO:0007005"/>
    <property type="project" value="PomBase"/>
</dbReference>
<dbReference type="GO" id="GO:0004676">
    <property type="term" value="F:3-phosphoinositide-dependent protein kinase activity"/>
    <property type="evidence" value="ECO:0000250"/>
    <property type="project" value="PomBase"/>
</dbReference>
<dbReference type="GO" id="GO:0005524">
    <property type="term" value="F:ATP binding"/>
    <property type="evidence" value="ECO:0007669"/>
    <property type="project" value="UniProtKB-KW"/>
</dbReference>
<dbReference type="GO" id="GO:0005547">
    <property type="term" value="F:phosphatidylinositol-3,4,5-trisphosphate binding"/>
    <property type="evidence" value="ECO:0000314"/>
    <property type="project" value="PomBase"/>
</dbReference>
<dbReference type="GO" id="GO:0004672">
    <property type="term" value="F:protein kinase activity"/>
    <property type="evidence" value="ECO:0000314"/>
    <property type="project" value="PomBase"/>
</dbReference>
<dbReference type="GO" id="GO:0106310">
    <property type="term" value="F:protein serine kinase activity"/>
    <property type="evidence" value="ECO:0007669"/>
    <property type="project" value="RHEA"/>
</dbReference>
<dbReference type="GO" id="GO:0004674">
    <property type="term" value="F:protein serine/threonine kinase activity"/>
    <property type="evidence" value="ECO:0000314"/>
    <property type="project" value="PomBase"/>
</dbReference>
<dbReference type="GO" id="GO:0071852">
    <property type="term" value="P:fungal-type cell wall organization or biogenesis"/>
    <property type="evidence" value="ECO:0000315"/>
    <property type="project" value="PomBase"/>
</dbReference>
<dbReference type="GO" id="GO:0035556">
    <property type="term" value="P:intracellular signal transduction"/>
    <property type="evidence" value="ECO:0000318"/>
    <property type="project" value="GO_Central"/>
</dbReference>
<dbReference type="CDD" id="cd05581">
    <property type="entry name" value="STKc_PDK1"/>
    <property type="match status" value="1"/>
</dbReference>
<dbReference type="FunFam" id="3.30.200.20:FF:000191">
    <property type="entry name" value="3-phosphoinositide-dependent protein kinase 2-like"/>
    <property type="match status" value="1"/>
</dbReference>
<dbReference type="FunFam" id="1.10.510.10:FF:000534">
    <property type="entry name" value="Serine/threonine-protein kinase PKH2"/>
    <property type="match status" value="1"/>
</dbReference>
<dbReference type="Gene3D" id="3.30.200.20">
    <property type="entry name" value="Phosphorylase Kinase, domain 1"/>
    <property type="match status" value="1"/>
</dbReference>
<dbReference type="Gene3D" id="2.30.29.30">
    <property type="entry name" value="Pleckstrin-homology domain (PH domain)/Phosphotyrosine-binding domain (PTB)"/>
    <property type="match status" value="1"/>
</dbReference>
<dbReference type="Gene3D" id="1.10.510.10">
    <property type="entry name" value="Transferase(Phosphotransferase) domain 1"/>
    <property type="match status" value="1"/>
</dbReference>
<dbReference type="InterPro" id="IPR011009">
    <property type="entry name" value="Kinase-like_dom_sf"/>
</dbReference>
<dbReference type="InterPro" id="IPR033931">
    <property type="entry name" value="PDK1-typ_PH"/>
</dbReference>
<dbReference type="InterPro" id="IPR039046">
    <property type="entry name" value="PDPK1"/>
</dbReference>
<dbReference type="InterPro" id="IPR011993">
    <property type="entry name" value="PH-like_dom_sf"/>
</dbReference>
<dbReference type="InterPro" id="IPR000719">
    <property type="entry name" value="Prot_kinase_dom"/>
</dbReference>
<dbReference type="InterPro" id="IPR017441">
    <property type="entry name" value="Protein_kinase_ATP_BS"/>
</dbReference>
<dbReference type="InterPro" id="IPR008271">
    <property type="entry name" value="Ser/Thr_kinase_AS"/>
</dbReference>
<dbReference type="InterPro" id="IPR050236">
    <property type="entry name" value="Ser_Thr_kinase_AGC"/>
</dbReference>
<dbReference type="PANTHER" id="PTHR24356:SF163">
    <property type="entry name" value="3-PHOSPHOINOSITIDE-DEPENDENT PROTEIN KINASE 1-RELATED"/>
    <property type="match status" value="1"/>
</dbReference>
<dbReference type="PANTHER" id="PTHR24356">
    <property type="entry name" value="SERINE/THREONINE-PROTEIN KINASE"/>
    <property type="match status" value="1"/>
</dbReference>
<dbReference type="Pfam" id="PF14593">
    <property type="entry name" value="PH_3"/>
    <property type="match status" value="1"/>
</dbReference>
<dbReference type="Pfam" id="PF00069">
    <property type="entry name" value="Pkinase"/>
    <property type="match status" value="1"/>
</dbReference>
<dbReference type="SMART" id="SM00220">
    <property type="entry name" value="S_TKc"/>
    <property type="match status" value="1"/>
</dbReference>
<dbReference type="SUPFAM" id="SSF50729">
    <property type="entry name" value="PH domain-like"/>
    <property type="match status" value="1"/>
</dbReference>
<dbReference type="SUPFAM" id="SSF56112">
    <property type="entry name" value="Protein kinase-like (PK-like)"/>
    <property type="match status" value="1"/>
</dbReference>
<dbReference type="PROSITE" id="PS00107">
    <property type="entry name" value="PROTEIN_KINASE_ATP"/>
    <property type="match status" value="1"/>
</dbReference>
<dbReference type="PROSITE" id="PS50011">
    <property type="entry name" value="PROTEIN_KINASE_DOM"/>
    <property type="match status" value="1"/>
</dbReference>
<dbReference type="PROSITE" id="PS00108">
    <property type="entry name" value="PROTEIN_KINASE_ST"/>
    <property type="match status" value="1"/>
</dbReference>
<reference key="1">
    <citation type="journal article" date="1999" name="Mol. Gen. Genet.">
        <title>A Schizosaccharomyces pombe gene, ksg1, that shows structural homology to the human phosphoinositide-dependent protein kinase PDK1, is essential for growth, mating and sporulation.</title>
        <authorList>
            <person name="Niederberger C."/>
            <person name="Schweingruber M.E."/>
        </authorList>
    </citation>
    <scope>NUCLEOTIDE SEQUENCE [GENOMIC DNA]</scope>
    <scope>FUNCTION</scope>
    <source>
        <strain>ATCC 38364 / 968</strain>
    </source>
</reference>
<reference key="2">
    <citation type="journal article" date="2002" name="Nature">
        <title>The genome sequence of Schizosaccharomyces pombe.</title>
        <authorList>
            <person name="Wood V."/>
            <person name="Gwilliam R."/>
            <person name="Rajandream M.A."/>
            <person name="Lyne M.H."/>
            <person name="Lyne R."/>
            <person name="Stewart A."/>
            <person name="Sgouros J.G."/>
            <person name="Peat N."/>
            <person name="Hayles J."/>
            <person name="Baker S.G."/>
            <person name="Basham D."/>
            <person name="Bowman S."/>
            <person name="Brooks K."/>
            <person name="Brown D."/>
            <person name="Brown S."/>
            <person name="Chillingworth T."/>
            <person name="Churcher C.M."/>
            <person name="Collins M."/>
            <person name="Connor R."/>
            <person name="Cronin A."/>
            <person name="Davis P."/>
            <person name="Feltwell T."/>
            <person name="Fraser A."/>
            <person name="Gentles S."/>
            <person name="Goble A."/>
            <person name="Hamlin N."/>
            <person name="Harris D.E."/>
            <person name="Hidalgo J."/>
            <person name="Hodgson G."/>
            <person name="Holroyd S."/>
            <person name="Hornsby T."/>
            <person name="Howarth S."/>
            <person name="Huckle E.J."/>
            <person name="Hunt S."/>
            <person name="Jagels K."/>
            <person name="James K.D."/>
            <person name="Jones L."/>
            <person name="Jones M."/>
            <person name="Leather S."/>
            <person name="McDonald S."/>
            <person name="McLean J."/>
            <person name="Mooney P."/>
            <person name="Moule S."/>
            <person name="Mungall K.L."/>
            <person name="Murphy L.D."/>
            <person name="Niblett D."/>
            <person name="Odell C."/>
            <person name="Oliver K."/>
            <person name="O'Neil S."/>
            <person name="Pearson D."/>
            <person name="Quail M.A."/>
            <person name="Rabbinowitsch E."/>
            <person name="Rutherford K.M."/>
            <person name="Rutter S."/>
            <person name="Saunders D."/>
            <person name="Seeger K."/>
            <person name="Sharp S."/>
            <person name="Skelton J."/>
            <person name="Simmonds M.N."/>
            <person name="Squares R."/>
            <person name="Squares S."/>
            <person name="Stevens K."/>
            <person name="Taylor K."/>
            <person name="Taylor R.G."/>
            <person name="Tivey A."/>
            <person name="Walsh S.V."/>
            <person name="Warren T."/>
            <person name="Whitehead S."/>
            <person name="Woodward J.R."/>
            <person name="Volckaert G."/>
            <person name="Aert R."/>
            <person name="Robben J."/>
            <person name="Grymonprez B."/>
            <person name="Weltjens I."/>
            <person name="Vanstreels E."/>
            <person name="Rieger M."/>
            <person name="Schaefer M."/>
            <person name="Mueller-Auer S."/>
            <person name="Gabel C."/>
            <person name="Fuchs M."/>
            <person name="Duesterhoeft A."/>
            <person name="Fritzc C."/>
            <person name="Holzer E."/>
            <person name="Moestl D."/>
            <person name="Hilbert H."/>
            <person name="Borzym K."/>
            <person name="Langer I."/>
            <person name="Beck A."/>
            <person name="Lehrach H."/>
            <person name="Reinhardt R."/>
            <person name="Pohl T.M."/>
            <person name="Eger P."/>
            <person name="Zimmermann W."/>
            <person name="Wedler H."/>
            <person name="Wambutt R."/>
            <person name="Purnelle B."/>
            <person name="Goffeau A."/>
            <person name="Cadieu E."/>
            <person name="Dreano S."/>
            <person name="Gloux S."/>
            <person name="Lelaure V."/>
            <person name="Mottier S."/>
            <person name="Galibert F."/>
            <person name="Aves S.J."/>
            <person name="Xiang Z."/>
            <person name="Hunt C."/>
            <person name="Moore K."/>
            <person name="Hurst S.M."/>
            <person name="Lucas M."/>
            <person name="Rochet M."/>
            <person name="Gaillardin C."/>
            <person name="Tallada V.A."/>
            <person name="Garzon A."/>
            <person name="Thode G."/>
            <person name="Daga R.R."/>
            <person name="Cruzado L."/>
            <person name="Jimenez J."/>
            <person name="Sanchez M."/>
            <person name="del Rey F."/>
            <person name="Benito J."/>
            <person name="Dominguez A."/>
            <person name="Revuelta J.L."/>
            <person name="Moreno S."/>
            <person name="Armstrong J."/>
            <person name="Forsburg S.L."/>
            <person name="Cerutti L."/>
            <person name="Lowe T."/>
            <person name="McCombie W.R."/>
            <person name="Paulsen I."/>
            <person name="Potashkin J."/>
            <person name="Shpakovski G.V."/>
            <person name="Ussery D."/>
            <person name="Barrell B.G."/>
            <person name="Nurse P."/>
        </authorList>
    </citation>
    <scope>NUCLEOTIDE SEQUENCE [LARGE SCALE GENOMIC DNA]</scope>
    <source>
        <strain>972 / ATCC 24843</strain>
    </source>
</reference>
<reference key="3">
    <citation type="journal article" date="2003" name="EMBO J.">
        <title>Schizosaccharomyces pombe AGC family kinase Gad8p forms a conserved signaling module with TOR and PDK1-like kinases.</title>
        <authorList>
            <person name="Matsuo T."/>
            <person name="Kubo Y."/>
            <person name="Watanabe Y."/>
            <person name="Yamamoto M."/>
        </authorList>
    </citation>
    <scope>FUNCTION</scope>
    <scope>CATALYTIC ACTIVITY</scope>
</reference>
<reference key="4">
    <citation type="journal article" date="2006" name="Nat. Biotechnol.">
        <title>ORFeome cloning and global analysis of protein localization in the fission yeast Schizosaccharomyces pombe.</title>
        <authorList>
            <person name="Matsuyama A."/>
            <person name="Arai R."/>
            <person name="Yashiroda Y."/>
            <person name="Shirai A."/>
            <person name="Kamata A."/>
            <person name="Sekido S."/>
            <person name="Kobayashi Y."/>
            <person name="Hashimoto A."/>
            <person name="Hamamoto M."/>
            <person name="Hiraoka Y."/>
            <person name="Horinouchi S."/>
            <person name="Yoshida M."/>
        </authorList>
    </citation>
    <scope>SUBCELLULAR LOCATION [LARGE SCALE ANALYSIS]</scope>
</reference>
<reference key="5">
    <citation type="journal article" date="2008" name="J. Proteome Res.">
        <title>Phosphoproteome analysis of fission yeast.</title>
        <authorList>
            <person name="Wilson-Grady J.T."/>
            <person name="Villen J."/>
            <person name="Gygi S.P."/>
        </authorList>
    </citation>
    <scope>PHOSPHORYLATION [LARGE SCALE ANALYSIS] AT SER-64 AND SER-69</scope>
    <scope>IDENTIFICATION BY MASS SPECTROMETRY</scope>
</reference>
<reference key="6">
    <citation type="journal article" date="2012" name="J. Cell Sci.">
        <title>Psk1, an AGC kinase family member in fission yeast, is directly phosphorylated and controlled by TORC1 and functions as S6 kinase.</title>
        <authorList>
            <person name="Nakashima A."/>
            <person name="Otsubo Y."/>
            <person name="Yamashita A."/>
            <person name="Sato T."/>
            <person name="Yamamoto M."/>
            <person name="Tamanoi F."/>
        </authorList>
    </citation>
    <scope>FUNCTION</scope>
    <scope>CATALYTIC ACTIVITY</scope>
</reference>